<gene>
    <name evidence="4" type="primary">sseK1</name>
    <name evidence="6" type="ORF">A673_00934</name>
</gene>
<keyword id="KW-0325">Glycoprotein</keyword>
<keyword id="KW-0328">Glycosyltransferase</keyword>
<keyword id="KW-1035">Host cytoplasm</keyword>
<keyword id="KW-0464">Manganese</keyword>
<keyword id="KW-0479">Metal-binding</keyword>
<keyword id="KW-0964">Secreted</keyword>
<keyword id="KW-0800">Toxin</keyword>
<keyword id="KW-0808">Transferase</keyword>
<keyword id="KW-0843">Virulence</keyword>
<dbReference type="EC" id="2.4.1.-" evidence="2"/>
<dbReference type="EMBL" id="ATFT01000016">
    <property type="protein sequence ID" value="EPI74832.1"/>
    <property type="status" value="ALT_INIT"/>
    <property type="molecule type" value="Genomic_DNA"/>
</dbReference>
<dbReference type="SMR" id="A0A656IJ15"/>
<dbReference type="GlyCosmos" id="A0A656IJ15">
    <property type="glycosylation" value="3 sites, No reported glycans"/>
</dbReference>
<dbReference type="Proteomes" id="UP000014535">
    <property type="component" value="Unassembled WGS sequence"/>
</dbReference>
<dbReference type="GO" id="GO:0005576">
    <property type="term" value="C:extracellular region"/>
    <property type="evidence" value="ECO:0007669"/>
    <property type="project" value="UniProtKB-SubCell"/>
</dbReference>
<dbReference type="GO" id="GO:0044164">
    <property type="term" value="C:host cell cytosol"/>
    <property type="evidence" value="ECO:0007669"/>
    <property type="project" value="UniProtKB-SubCell"/>
</dbReference>
<dbReference type="GO" id="GO:0016757">
    <property type="term" value="F:glycosyltransferase activity"/>
    <property type="evidence" value="ECO:0007669"/>
    <property type="project" value="UniProtKB-KW"/>
</dbReference>
<dbReference type="GO" id="GO:0046872">
    <property type="term" value="F:metal ion binding"/>
    <property type="evidence" value="ECO:0007669"/>
    <property type="project" value="UniProtKB-KW"/>
</dbReference>
<dbReference type="GO" id="GO:0090729">
    <property type="term" value="F:toxin activity"/>
    <property type="evidence" value="ECO:0007669"/>
    <property type="project" value="UniProtKB-KW"/>
</dbReference>
<dbReference type="NCBIfam" id="NF011911">
    <property type="entry name" value="PRK15384.1"/>
    <property type="match status" value="1"/>
</dbReference>
<dbReference type="Pfam" id="PF24688">
    <property type="entry name" value="SseK_NleB"/>
    <property type="match status" value="1"/>
</dbReference>
<proteinExistence type="inferred from homology"/>
<organism>
    <name type="scientific">Salmonella enteritidis (strain 2009K0958)</name>
    <dbReference type="NCBI Taxonomy" id="1192586"/>
    <lineage>
        <taxon>Bacteria</taxon>
        <taxon>Pseudomonadati</taxon>
        <taxon>Pseudomonadota</taxon>
        <taxon>Gammaproteobacteria</taxon>
        <taxon>Enterobacterales</taxon>
        <taxon>Enterobacteriaceae</taxon>
        <taxon>Salmonella</taxon>
    </lineage>
</organism>
<name>SSEK1_SALE2</name>
<comment type="function">
    <text evidence="1 2">Protein-arginine N-acetylglucosaminyltransferase effector that disrupts TNF signaling in infected cells, including NF-kappa-B signaling, apoptosis and necroptosis. Acts by catalyzing the transfer of a single N-acetylglucosamine (GlcNAc) to a conserved arginine residue in the death domain of host proteins TRADD and, to a lower extent, FADD: arginine GlcNAcylation prevents homotypic/heterotypic death domain interactions and assembly of the oligomeric TNF-alpha receptor complex, thereby disrupting TNF signaling (By similarity). Also acts on host proteins without a death domain: catalyzes arginine GlcNAcylation of host GAPDH protein, thereby preventing GAPDH interaction with TRAF2, leading to inhibit NF-kappa-B signaling (By similarity). Catalyzes GlcNAcylation of host tubulin-folding cofactor TBCB, thereby promoting microtubule stability (By similarity). Also mediates auto-GlcNAcylation, which is required for activity toward death domain-containing host target proteins (By similarity).</text>
</comment>
<comment type="catalytic activity">
    <reaction evidence="1">
        <text>L-arginyl-[protein] + UDP-N-acetyl-alpha-D-glucosamine = N(omega)-(N-acetyl-beta-D-glucosaminyl)-L-arginyl-[protein] + UDP + H(+)</text>
        <dbReference type="Rhea" id="RHEA:66632"/>
        <dbReference type="Rhea" id="RHEA-COMP:10532"/>
        <dbReference type="Rhea" id="RHEA-COMP:17079"/>
        <dbReference type="ChEBI" id="CHEBI:15378"/>
        <dbReference type="ChEBI" id="CHEBI:29965"/>
        <dbReference type="ChEBI" id="CHEBI:57705"/>
        <dbReference type="ChEBI" id="CHEBI:58223"/>
        <dbReference type="ChEBI" id="CHEBI:167322"/>
    </reaction>
    <physiologicalReaction direction="left-to-right" evidence="1">
        <dbReference type="Rhea" id="RHEA:66633"/>
    </physiologicalReaction>
</comment>
<comment type="cofactor">
    <cofactor evidence="1">
        <name>Mn(2+)</name>
        <dbReference type="ChEBI" id="CHEBI:29035"/>
    </cofactor>
</comment>
<comment type="activity regulation">
    <text evidence="2">Protein-arginine N-acetylglucosaminyltransferase activity is inhibited by 100066N compound (flavone analog) and 102644N compound (a substituted isoxazole).</text>
</comment>
<comment type="subcellular location">
    <subcellularLocation>
        <location evidence="2">Secreted</location>
    </subcellularLocation>
    <subcellularLocation>
        <location evidence="1">Host cytoplasm</location>
        <location evidence="1">Host cytosol</location>
    </subcellularLocation>
    <text evidence="2">Secreted via type III secretion systems 1 and 2 (SPI-1 and SPI-2 T3SS).</text>
</comment>
<comment type="domain">
    <text evidence="1">Adopts a GT-A fold and acts as an inverting enzyme that converts the alpha-configuration in the UDP-N-acetyl-alpha-D-glucosamine donor to the beta configuration in the N-linked (GlcNAc) arginine product.</text>
</comment>
<comment type="PTM">
    <text evidence="1">Auto-glycosylated: arginine GlcNAcylation is required for activity toward death domain-containing host target proteins.</text>
</comment>
<comment type="disruption phenotype">
    <text evidence="3">Reduced virulence.</text>
</comment>
<comment type="similarity">
    <text evidence="5">Belongs to the glycosyltransferase NleB family.</text>
</comment>
<comment type="sequence caution" evidence="5">
    <conflict type="erroneous initiation">
        <sequence resource="EMBL-CDS" id="EPI74832"/>
    </conflict>
    <text>Truncated N-terminus.</text>
</comment>
<feature type="chain" id="PRO_0000452598" description="Protein-arginine N-acetylglucosaminyltransferase SseK1">
    <location>
        <begin position="1"/>
        <end position="336"/>
    </location>
</feature>
<feature type="short sequence motif" description="DXD motif" evidence="5">
    <location>
        <begin position="223"/>
        <end position="225"/>
    </location>
</feature>
<feature type="active site" description="Proton acceptor" evidence="1">
    <location>
        <position position="255"/>
    </location>
</feature>
<feature type="binding site" evidence="1">
    <location>
        <begin position="50"/>
        <end position="52"/>
    </location>
    <ligand>
        <name>UDP-N-acetyl-alpha-D-glucosamine</name>
        <dbReference type="ChEBI" id="CHEBI:57705"/>
    </ligand>
</feature>
<feature type="binding site" evidence="1">
    <location>
        <position position="74"/>
    </location>
    <ligand>
        <name>UDP-N-acetyl-alpha-D-glucosamine</name>
        <dbReference type="ChEBI" id="CHEBI:57705"/>
    </ligand>
</feature>
<feature type="binding site" evidence="1">
    <location>
        <begin position="224"/>
        <end position="225"/>
    </location>
    <ligand>
        <name>UDP-N-acetyl-alpha-D-glucosamine</name>
        <dbReference type="ChEBI" id="CHEBI:57705"/>
    </ligand>
</feature>
<feature type="binding site" evidence="1">
    <location>
        <position position="225"/>
    </location>
    <ligand>
        <name>Mn(2+)</name>
        <dbReference type="ChEBI" id="CHEBI:29035"/>
    </ligand>
</feature>
<feature type="binding site" evidence="1">
    <location>
        <position position="322"/>
    </location>
    <ligand>
        <name>Mn(2+)</name>
        <dbReference type="ChEBI" id="CHEBI:29035"/>
    </ligand>
</feature>
<feature type="binding site" evidence="1">
    <location>
        <position position="324"/>
    </location>
    <ligand>
        <name>Mn(2+)</name>
        <dbReference type="ChEBI" id="CHEBI:29035"/>
    </ligand>
</feature>
<feature type="binding site" evidence="1">
    <location>
        <position position="324"/>
    </location>
    <ligand>
        <name>UDP-N-acetyl-alpha-D-glucosamine</name>
        <dbReference type="ChEBI" id="CHEBI:57705"/>
    </ligand>
</feature>
<feature type="binding site" evidence="1">
    <location>
        <position position="329"/>
    </location>
    <ligand>
        <name>UDP-N-acetyl-alpha-D-glucosamine</name>
        <dbReference type="ChEBI" id="CHEBI:57705"/>
    </ligand>
</feature>
<feature type="glycosylation site" description="N-beta-linked (GlcNAc) arginine; by autocatalysis" evidence="1">
    <location>
        <position position="24"/>
    </location>
</feature>
<feature type="glycosylation site" description="N-beta-linked (GlcNAc) arginine; by autocatalysis" evidence="1">
    <location>
        <position position="152"/>
    </location>
</feature>
<feature type="glycosylation site" description="N-beta-linked (GlcNAc) arginine; by autocatalysis" evidence="1">
    <location>
        <position position="333"/>
    </location>
</feature>
<reference key="1">
    <citation type="submission" date="2013-04" db="EMBL/GenBank/DDBJ databases">
        <authorList>
            <person name="McClelland M."/>
            <person name="Porwollik S."/>
            <person name="Desai P."/>
            <person name="Cheng P."/>
            <person name="Wollam A."/>
            <person name="Pepin K."/>
            <person name="Palsikar V.B."/>
            <person name="Fulton L."/>
            <person name="Fulton R."/>
            <person name="Delehaunty K."/>
            <person name="Fronick C."/>
            <person name="Godfrey J."/>
            <person name="Waligorski J."/>
            <person name="Appelbaum E."/>
            <person name="Tomlinson C."/>
            <person name="Warren W."/>
            <person name="Sodergren E."/>
            <person name="Weinstock G."/>
            <person name="Wilson R.K."/>
        </authorList>
    </citation>
    <scope>NUCLEOTIDE SEQUENCE [LARGE SCALE GENOMIC DNA]</scope>
    <source>
        <strain>2009K0958</strain>
    </source>
</reference>
<reference key="2">
    <citation type="journal article" date="2018" name="Microb. Pathog.">
        <title>Role of the sseK1 gene in the pathogenicity of Salmonella enterica serovar enteritidis in vitro and in vivo.</title>
        <authorList>
            <person name="Yang Y."/>
            <person name="Yu C."/>
            <person name="Ding K."/>
            <person name="Zhang C."/>
            <person name="Liao C."/>
            <person name="Jia Y."/>
            <person name="Li J."/>
            <person name="Cheng X."/>
        </authorList>
    </citation>
    <scope>DISRUPTION PHENOTYPE</scope>
    <source>
        <strain>ATCC 13076 / CDC K-1891</strain>
    </source>
</reference>
<accession>A0A656IJ15</accession>
<evidence type="ECO:0000250" key="1">
    <source>
        <dbReference type="UniProtKB" id="A0A0H3NK84"/>
    </source>
</evidence>
<evidence type="ECO:0000250" key="2">
    <source>
        <dbReference type="UniProtKB" id="Q9L9J3"/>
    </source>
</evidence>
<evidence type="ECO:0000269" key="3">
    <source>
    </source>
</evidence>
<evidence type="ECO:0000303" key="4">
    <source>
    </source>
</evidence>
<evidence type="ECO:0000305" key="5"/>
<evidence type="ECO:0000312" key="6">
    <source>
        <dbReference type="EMBL" id="EPI74832.1"/>
    </source>
</evidence>
<protein>
    <recommendedName>
        <fullName evidence="5">Protein-arginine N-acetylglucosaminyltransferase SseK1</fullName>
        <shortName evidence="5">Arginine GlcNAcyltransferase SseK1</shortName>
        <ecNumber evidence="2">2.4.1.-</ecNumber>
    </recommendedName>
    <alternativeName>
        <fullName evidence="4">Salmonella secreted effector K1</fullName>
    </alternativeName>
</protein>
<sequence length="336" mass="38836">MIPPLNRYVPALSKNELVKTVTNRDIQFTSFNGKDYPLCFLDEKTPLLFQWFERNPARFGKNDIPIINTEKNPYLNNIIKAATIEKERLIGIFVDGDFFPGQKDAFSKLEYDYENIKVIYRNDIDFSMYDKKLSEIYMENISKQESMPEEKRDCHLLQLLKKELSDIQEGNDSLIKSYLLDKGHGWFDFYRNMAMLKAGQLFLEADKVGCYDLSTNSGCIYLDADMIITEKLGGIYIPDGIAVHVERIDGRASMENGIIAVDRNNHPALLAGLEIMHTKFDADPYSDGVCNGIRKHFNYSLNEDYNSFCDFIEFKHDNIIMNTSQFTQSSWARHVQ</sequence>